<evidence type="ECO:0000256" key="1">
    <source>
        <dbReference type="SAM" id="MobiDB-lite"/>
    </source>
</evidence>
<dbReference type="EMBL" id="M31032">
    <property type="protein sequence ID" value="AAA40969.1"/>
    <property type="molecule type" value="mRNA"/>
</dbReference>
<dbReference type="EMBL" id="M58654">
    <property type="protein sequence ID" value="AAA41279.1"/>
    <property type="status" value="ALT_SEQ"/>
    <property type="molecule type" value="mRNA"/>
</dbReference>
<dbReference type="PIR" id="A29545">
    <property type="entry name" value="A29545"/>
</dbReference>
<dbReference type="PIR" id="B38647">
    <property type="entry name" value="B38647"/>
</dbReference>
<dbReference type="RefSeq" id="NP_852105.1">
    <property type="nucleotide sequence ID" value="NM_181440.1"/>
</dbReference>
<dbReference type="RefSeq" id="NP_976077.1">
    <property type="nucleotide sequence ID" value="NM_203332.1"/>
</dbReference>
<dbReference type="STRING" id="10116.ENSRNOP00000073391"/>
<dbReference type="PaxDb" id="10116-ENSRNOP00000007659"/>
<dbReference type="GeneID" id="360395"/>
<dbReference type="KEGG" id="rno:120093082"/>
<dbReference type="KEGG" id="rno:360395"/>
<dbReference type="UCSC" id="RGD:735181">
    <property type="organism name" value="rat"/>
</dbReference>
<dbReference type="AGR" id="RGD:619775"/>
<dbReference type="AGR" id="RGD:735181"/>
<dbReference type="CTD" id="11272"/>
<dbReference type="CTD" id="5554"/>
<dbReference type="RGD" id="735181">
    <property type="gene designation" value="Grpcb"/>
</dbReference>
<dbReference type="InParanoid" id="P08462"/>
<dbReference type="PRO" id="PR:P08462"/>
<dbReference type="Proteomes" id="UP000002494">
    <property type="component" value="Unplaced"/>
</dbReference>
<dbReference type="GO" id="GO:0005576">
    <property type="term" value="C:extracellular region"/>
    <property type="evidence" value="ECO:0007669"/>
    <property type="project" value="UniProtKB-SubCell"/>
</dbReference>
<dbReference type="GO" id="GO:0031214">
    <property type="term" value="P:biomineral tissue development"/>
    <property type="evidence" value="ECO:0007669"/>
    <property type="project" value="UniProtKB-KW"/>
</dbReference>
<dbReference type="InterPro" id="IPR026086">
    <property type="entry name" value="Pro-rich"/>
</dbReference>
<dbReference type="PANTHER" id="PTHR23203:SF20">
    <property type="entry name" value="BASIC SALIVARY PROLINE-RICH PROTEIN 1-RELATED"/>
    <property type="match status" value="1"/>
</dbReference>
<dbReference type="PANTHER" id="PTHR23203">
    <property type="entry name" value="PROLINE-RICH PROTEIN"/>
    <property type="match status" value="1"/>
</dbReference>
<dbReference type="Pfam" id="PF15240">
    <property type="entry name" value="Pro-rich"/>
    <property type="match status" value="1"/>
</dbReference>
<dbReference type="SMART" id="SM01412">
    <property type="entry name" value="Pro-rich"/>
    <property type="match status" value="1"/>
</dbReference>
<feature type="signal peptide">
    <location>
        <begin position="1"/>
        <end position="18"/>
    </location>
</feature>
<feature type="chain" id="PRO_0000013037" description="Submandibular gland secretory Glx-rich protein CB">
    <location>
        <begin position="19"/>
        <end position="247"/>
    </location>
</feature>
<feature type="repeat" description="1">
    <location>
        <begin position="67"/>
        <end position="89"/>
    </location>
</feature>
<feature type="repeat" description="2">
    <location>
        <begin position="90"/>
        <end position="112"/>
    </location>
</feature>
<feature type="repeat" description="3">
    <location>
        <begin position="113"/>
        <end position="135"/>
    </location>
</feature>
<feature type="repeat" description="4">
    <location>
        <begin position="136"/>
        <end position="158"/>
    </location>
</feature>
<feature type="repeat" description="5">
    <location>
        <begin position="159"/>
        <end position="181"/>
    </location>
</feature>
<feature type="region of interest" description="Disordered" evidence="1">
    <location>
        <begin position="14"/>
        <end position="219"/>
    </location>
</feature>
<feature type="region of interest" description="5 X 23 AA tandem repeats">
    <location>
        <begin position="67"/>
        <end position="181"/>
    </location>
</feature>
<feature type="compositionally biased region" description="Low complexity" evidence="1">
    <location>
        <begin position="39"/>
        <end position="50"/>
    </location>
</feature>
<feature type="compositionally biased region" description="Low complexity" evidence="1">
    <location>
        <begin position="58"/>
        <end position="71"/>
    </location>
</feature>
<feature type="compositionally biased region" description="Low complexity" evidence="1">
    <location>
        <begin position="81"/>
        <end position="93"/>
    </location>
</feature>
<feature type="compositionally biased region" description="Low complexity" evidence="1">
    <location>
        <begin position="104"/>
        <end position="116"/>
    </location>
</feature>
<feature type="compositionally biased region" description="Low complexity" evidence="1">
    <location>
        <begin position="126"/>
        <end position="139"/>
    </location>
</feature>
<feature type="compositionally biased region" description="Low complexity" evidence="1">
    <location>
        <begin position="150"/>
        <end position="159"/>
    </location>
</feature>
<feature type="compositionally biased region" description="Low complexity" evidence="1">
    <location>
        <begin position="178"/>
        <end position="196"/>
    </location>
</feature>
<feature type="compositionally biased region" description="Basic and acidic residues" evidence="1">
    <location>
        <begin position="197"/>
        <end position="212"/>
    </location>
</feature>
<sequence>MLVVLLTAALLALSSAQGTDEEVNNAETSDVPADSEQQPVDSGSDPPSADADAENVQEGESAPPANEEPPATSGSEEEQQQQEPTQAENQEPPATSGSEEEQQQQEPTQAENQEPPATSGSEEEQQQQQPTQAENQEPPATSGSEEEQQQQESTQAENQEPSDSAGEGQETQPEEGNVESPPSSPENSQEQPQQTNPEEKPPAPKTQEEPQHYRGRPPKKIFPFFIYRGRPVVVFRLEPRNPFARRF</sequence>
<comment type="function">
    <text>GRP proteins have a marked affinity for hydroxyapatite. They may play a role in the formation of the protective acquired pellicle at the saliva-tooth interface.</text>
</comment>
<comment type="subcellular location">
    <subcellularLocation>
        <location>Secreted</location>
    </subcellularLocation>
</comment>
<comment type="tissue specificity">
    <text>Submandibular gland acinar cells.</text>
</comment>
<gene>
    <name type="primary">Grpcb</name>
</gene>
<name>GRPB_RAT</name>
<proteinExistence type="evidence at transcript level"/>
<accession>P08462</accession>
<keyword id="KW-0091">Biomineralization</keyword>
<keyword id="KW-1185">Reference proteome</keyword>
<keyword id="KW-0677">Repeat</keyword>
<keyword id="KW-0964">Secreted</keyword>
<keyword id="KW-0732">Signal</keyword>
<protein>
    <recommendedName>
        <fullName>Submandibular gland secretory Glx-rich protein CB</fullName>
        <shortName>GRP-CB</shortName>
    </recommendedName>
    <alternativeName>
        <fullName>Contiguous repeat polypeptide</fullName>
        <shortName>CRP</shortName>
    </alternativeName>
</protein>
<organism>
    <name type="scientific">Rattus norvegicus</name>
    <name type="common">Rat</name>
    <dbReference type="NCBI Taxonomy" id="10116"/>
    <lineage>
        <taxon>Eukaryota</taxon>
        <taxon>Metazoa</taxon>
        <taxon>Chordata</taxon>
        <taxon>Craniata</taxon>
        <taxon>Vertebrata</taxon>
        <taxon>Euteleostomi</taxon>
        <taxon>Mammalia</taxon>
        <taxon>Eutheria</taxon>
        <taxon>Euarchontoglires</taxon>
        <taxon>Glires</taxon>
        <taxon>Rodentia</taxon>
        <taxon>Myomorpha</taxon>
        <taxon>Muroidea</taxon>
        <taxon>Muridae</taxon>
        <taxon>Murinae</taxon>
        <taxon>Rattus</taxon>
    </lineage>
</organism>
<reference key="1">
    <citation type="journal article" date="1987" name="J. Biol. Chem.">
        <title>Genes encoding proteins with homologous contiguous repeat sequences are highly expressed in the serous cells of the rat submandibular gland.</title>
        <authorList>
            <person name="Heinrich G."/>
            <person name="Habener J.F."/>
        </authorList>
    </citation>
    <scope>NUCLEOTIDE SEQUENCE [MRNA]</scope>
    <source>
        <tissue>Liver</tissue>
    </source>
</reference>
<reference key="2">
    <citation type="journal article" date="1991" name="J. Biol. Chem.">
        <title>Secretagogue-coupled changes in the expression of glutamine/glutamic acid-rich proteins (GRPs). Isoproterenol induces changes in GRP transcript expression and changes in isoforms secreted.</title>
        <authorList>
            <person name="Cooper L.F."/>
            <person name="Elia D.M."/>
            <person name="Tabak L.A."/>
        </authorList>
    </citation>
    <scope>NUCLEOTIDE SEQUENCE [MRNA]</scope>
    <source>
        <strain>Wistar</strain>
    </source>
</reference>